<protein>
    <recommendedName>
        <fullName evidence="1">Ribosomal RNA small subunit methyltransferase G</fullName>
        <ecNumber evidence="1">2.1.1.170</ecNumber>
    </recommendedName>
    <alternativeName>
        <fullName evidence="1">16S rRNA 7-methylguanosine methyltransferase</fullName>
        <shortName evidence="1">16S rRNA m7G methyltransferase</shortName>
    </alternativeName>
</protein>
<proteinExistence type="inferred from homology"/>
<name>RSMG_COXBN</name>
<feature type="chain" id="PRO_1000075219" description="Ribosomal RNA small subunit methyltransferase G">
    <location>
        <begin position="1"/>
        <end position="204"/>
    </location>
</feature>
<feature type="binding site" evidence="1">
    <location>
        <position position="73"/>
    </location>
    <ligand>
        <name>S-adenosyl-L-methionine</name>
        <dbReference type="ChEBI" id="CHEBI:59789"/>
    </ligand>
</feature>
<feature type="binding site" evidence="1">
    <location>
        <position position="78"/>
    </location>
    <ligand>
        <name>S-adenosyl-L-methionine</name>
        <dbReference type="ChEBI" id="CHEBI:59789"/>
    </ligand>
</feature>
<feature type="binding site" evidence="1">
    <location>
        <position position="139"/>
    </location>
    <ligand>
        <name>S-adenosyl-L-methionine</name>
        <dbReference type="ChEBI" id="CHEBI:59789"/>
    </ligand>
</feature>
<organism>
    <name type="scientific">Coxiella burnetii (strain Dugway 5J108-111)</name>
    <dbReference type="NCBI Taxonomy" id="434922"/>
    <lineage>
        <taxon>Bacteria</taxon>
        <taxon>Pseudomonadati</taxon>
        <taxon>Pseudomonadota</taxon>
        <taxon>Gammaproteobacteria</taxon>
        <taxon>Legionellales</taxon>
        <taxon>Coxiellaceae</taxon>
        <taxon>Coxiella</taxon>
    </lineage>
</organism>
<keyword id="KW-0963">Cytoplasm</keyword>
<keyword id="KW-0489">Methyltransferase</keyword>
<keyword id="KW-0698">rRNA processing</keyword>
<keyword id="KW-0949">S-adenosyl-L-methionine</keyword>
<keyword id="KW-0808">Transferase</keyword>
<dbReference type="EC" id="2.1.1.170" evidence="1"/>
<dbReference type="EMBL" id="CP000733">
    <property type="protein sequence ID" value="ABS77474.1"/>
    <property type="molecule type" value="Genomic_DNA"/>
</dbReference>
<dbReference type="RefSeq" id="WP_011996461.1">
    <property type="nucleotide sequence ID" value="NC_009727.1"/>
</dbReference>
<dbReference type="SMR" id="A9KBS7"/>
<dbReference type="KEGG" id="cbd:CBUD_0197"/>
<dbReference type="HOGENOM" id="CLU_065341_2_0_6"/>
<dbReference type="Proteomes" id="UP000008555">
    <property type="component" value="Chromosome"/>
</dbReference>
<dbReference type="GO" id="GO:0005829">
    <property type="term" value="C:cytosol"/>
    <property type="evidence" value="ECO:0007669"/>
    <property type="project" value="TreeGrafter"/>
</dbReference>
<dbReference type="GO" id="GO:0070043">
    <property type="term" value="F:rRNA (guanine-N7-)-methyltransferase activity"/>
    <property type="evidence" value="ECO:0007669"/>
    <property type="project" value="UniProtKB-UniRule"/>
</dbReference>
<dbReference type="CDD" id="cd02440">
    <property type="entry name" value="AdoMet_MTases"/>
    <property type="match status" value="1"/>
</dbReference>
<dbReference type="FunFam" id="3.40.50.150:FF:000682">
    <property type="entry name" value="Ribosomal RNA small subunit methyltransferase G"/>
    <property type="match status" value="1"/>
</dbReference>
<dbReference type="Gene3D" id="3.40.50.150">
    <property type="entry name" value="Vaccinia Virus protein VP39"/>
    <property type="match status" value="1"/>
</dbReference>
<dbReference type="HAMAP" id="MF_00074">
    <property type="entry name" value="16SrRNA_methyltr_G"/>
    <property type="match status" value="1"/>
</dbReference>
<dbReference type="InterPro" id="IPR003682">
    <property type="entry name" value="rRNA_ssu_MeTfrase_G"/>
</dbReference>
<dbReference type="InterPro" id="IPR029063">
    <property type="entry name" value="SAM-dependent_MTases_sf"/>
</dbReference>
<dbReference type="NCBIfam" id="TIGR00138">
    <property type="entry name" value="rsmG_gidB"/>
    <property type="match status" value="1"/>
</dbReference>
<dbReference type="PANTHER" id="PTHR31760">
    <property type="entry name" value="S-ADENOSYL-L-METHIONINE-DEPENDENT METHYLTRANSFERASES SUPERFAMILY PROTEIN"/>
    <property type="match status" value="1"/>
</dbReference>
<dbReference type="PANTHER" id="PTHR31760:SF0">
    <property type="entry name" value="S-ADENOSYL-L-METHIONINE-DEPENDENT METHYLTRANSFERASES SUPERFAMILY PROTEIN"/>
    <property type="match status" value="1"/>
</dbReference>
<dbReference type="Pfam" id="PF02527">
    <property type="entry name" value="GidB"/>
    <property type="match status" value="1"/>
</dbReference>
<dbReference type="PIRSF" id="PIRSF003078">
    <property type="entry name" value="GidB"/>
    <property type="match status" value="1"/>
</dbReference>
<dbReference type="SUPFAM" id="SSF53335">
    <property type="entry name" value="S-adenosyl-L-methionine-dependent methyltransferases"/>
    <property type="match status" value="1"/>
</dbReference>
<reference key="1">
    <citation type="journal article" date="2009" name="Infect. Immun.">
        <title>Comparative genomics reveal extensive transposon-mediated genomic plasticity and diversity among potential effector proteins within the genus Coxiella.</title>
        <authorList>
            <person name="Beare P.A."/>
            <person name="Unsworth N."/>
            <person name="Andoh M."/>
            <person name="Voth D.E."/>
            <person name="Omsland A."/>
            <person name="Gilk S.D."/>
            <person name="Williams K.P."/>
            <person name="Sobral B.W."/>
            <person name="Kupko J.J. III"/>
            <person name="Porcella S.F."/>
            <person name="Samuel J.E."/>
            <person name="Heinzen R.A."/>
        </authorList>
    </citation>
    <scope>NUCLEOTIDE SEQUENCE [LARGE SCALE GENOMIC DNA]</scope>
    <source>
        <strain>Dugway 5J108-111</strain>
    </source>
</reference>
<accession>A9KBS7</accession>
<evidence type="ECO:0000255" key="1">
    <source>
        <dbReference type="HAMAP-Rule" id="MF_00074"/>
    </source>
</evidence>
<sequence>MTEKLKQGIDQLGLKVPETIQQSMFAFLAFLQKWNQAYNLTAITEIKSMITHHLLDSLSILPYLKGDKILDVGSGAGFPGIPLAFACPEKKFTLIDSKAKKTAFLLQAASRFKITNVTIIQERVGSYQPGFYFDTITCRALGSVREIMEQTNHLLRPGGQWLIMKGTYPEKELRGTDASAIVHVLNVPGLKAERHLVEVKNNKG</sequence>
<comment type="function">
    <text evidence="1">Specifically methylates the N7 position of guanine in position 527 of 16S rRNA.</text>
</comment>
<comment type="catalytic activity">
    <reaction evidence="1">
        <text>guanosine(527) in 16S rRNA + S-adenosyl-L-methionine = N(7)-methylguanosine(527) in 16S rRNA + S-adenosyl-L-homocysteine</text>
        <dbReference type="Rhea" id="RHEA:42732"/>
        <dbReference type="Rhea" id="RHEA-COMP:10209"/>
        <dbReference type="Rhea" id="RHEA-COMP:10210"/>
        <dbReference type="ChEBI" id="CHEBI:57856"/>
        <dbReference type="ChEBI" id="CHEBI:59789"/>
        <dbReference type="ChEBI" id="CHEBI:74269"/>
        <dbReference type="ChEBI" id="CHEBI:74480"/>
        <dbReference type="EC" id="2.1.1.170"/>
    </reaction>
</comment>
<comment type="subcellular location">
    <subcellularLocation>
        <location evidence="1">Cytoplasm</location>
    </subcellularLocation>
</comment>
<comment type="similarity">
    <text evidence="1">Belongs to the methyltransferase superfamily. RNA methyltransferase RsmG family.</text>
</comment>
<gene>
    <name evidence="1" type="primary">rsmG</name>
    <name type="ordered locus">CBUD_0197</name>
</gene>